<reference key="1">
    <citation type="submission" date="2006-03" db="EMBL/GenBank/DDBJ databases">
        <title>Complete sequence of chromosome of Nitrobacter hamburgensis X14.</title>
        <authorList>
            <consortium name="US DOE Joint Genome Institute"/>
            <person name="Copeland A."/>
            <person name="Lucas S."/>
            <person name="Lapidus A."/>
            <person name="Barry K."/>
            <person name="Detter J.C."/>
            <person name="Glavina del Rio T."/>
            <person name="Hammon N."/>
            <person name="Israni S."/>
            <person name="Dalin E."/>
            <person name="Tice H."/>
            <person name="Pitluck S."/>
            <person name="Chain P."/>
            <person name="Malfatti S."/>
            <person name="Shin M."/>
            <person name="Vergez L."/>
            <person name="Schmutz J."/>
            <person name="Larimer F."/>
            <person name="Land M."/>
            <person name="Hauser L."/>
            <person name="Kyrpides N."/>
            <person name="Ivanova N."/>
            <person name="Ward B."/>
            <person name="Arp D."/>
            <person name="Klotz M."/>
            <person name="Stein L."/>
            <person name="O'Mullan G."/>
            <person name="Starkenburg S."/>
            <person name="Sayavedra L."/>
            <person name="Poret-Peterson A.T."/>
            <person name="Gentry M.E."/>
            <person name="Bruce D."/>
            <person name="Richardson P."/>
        </authorList>
    </citation>
    <scope>NUCLEOTIDE SEQUENCE [LARGE SCALE GENOMIC DNA]</scope>
    <source>
        <strain>DSM 10229 / NCIMB 13809 / X14</strain>
    </source>
</reference>
<keyword id="KW-1185">Reference proteome</keyword>
<keyword id="KW-0687">Ribonucleoprotein</keyword>
<keyword id="KW-0689">Ribosomal protein</keyword>
<accession>Q1QN31</accession>
<comment type="function">
    <text evidence="1">Involved in the binding of tRNA to the ribosomes.</text>
</comment>
<comment type="subunit">
    <text evidence="1">Part of the 30S ribosomal subunit.</text>
</comment>
<comment type="similarity">
    <text evidence="1">Belongs to the universal ribosomal protein uS10 family.</text>
</comment>
<name>RS10_NITHX</name>
<gene>
    <name evidence="1" type="primary">rpsJ</name>
    <name type="ordered locus">Nham_1544</name>
</gene>
<dbReference type="EMBL" id="CP000319">
    <property type="protein sequence ID" value="ABE62366.1"/>
    <property type="molecule type" value="Genomic_DNA"/>
</dbReference>
<dbReference type="RefSeq" id="WP_002712302.1">
    <property type="nucleotide sequence ID" value="NC_007964.1"/>
</dbReference>
<dbReference type="SMR" id="Q1QN31"/>
<dbReference type="STRING" id="323097.Nham_1544"/>
<dbReference type="GeneID" id="93215325"/>
<dbReference type="KEGG" id="nha:Nham_1544"/>
<dbReference type="eggNOG" id="COG0051">
    <property type="taxonomic scope" value="Bacteria"/>
</dbReference>
<dbReference type="HOGENOM" id="CLU_122625_1_3_5"/>
<dbReference type="OrthoDB" id="9804464at2"/>
<dbReference type="Proteomes" id="UP000001953">
    <property type="component" value="Chromosome"/>
</dbReference>
<dbReference type="GO" id="GO:1990904">
    <property type="term" value="C:ribonucleoprotein complex"/>
    <property type="evidence" value="ECO:0007669"/>
    <property type="project" value="UniProtKB-KW"/>
</dbReference>
<dbReference type="GO" id="GO:0005840">
    <property type="term" value="C:ribosome"/>
    <property type="evidence" value="ECO:0007669"/>
    <property type="project" value="UniProtKB-KW"/>
</dbReference>
<dbReference type="GO" id="GO:0003735">
    <property type="term" value="F:structural constituent of ribosome"/>
    <property type="evidence" value="ECO:0007669"/>
    <property type="project" value="InterPro"/>
</dbReference>
<dbReference type="GO" id="GO:0000049">
    <property type="term" value="F:tRNA binding"/>
    <property type="evidence" value="ECO:0007669"/>
    <property type="project" value="UniProtKB-UniRule"/>
</dbReference>
<dbReference type="GO" id="GO:0006412">
    <property type="term" value="P:translation"/>
    <property type="evidence" value="ECO:0007669"/>
    <property type="project" value="UniProtKB-UniRule"/>
</dbReference>
<dbReference type="FunFam" id="3.30.70.600:FF:000001">
    <property type="entry name" value="30S ribosomal protein S10"/>
    <property type="match status" value="1"/>
</dbReference>
<dbReference type="Gene3D" id="3.30.70.600">
    <property type="entry name" value="Ribosomal protein S10 domain"/>
    <property type="match status" value="1"/>
</dbReference>
<dbReference type="HAMAP" id="MF_00508">
    <property type="entry name" value="Ribosomal_uS10"/>
    <property type="match status" value="1"/>
</dbReference>
<dbReference type="InterPro" id="IPR001848">
    <property type="entry name" value="Ribosomal_uS10"/>
</dbReference>
<dbReference type="InterPro" id="IPR018268">
    <property type="entry name" value="Ribosomal_uS10_CS"/>
</dbReference>
<dbReference type="InterPro" id="IPR027486">
    <property type="entry name" value="Ribosomal_uS10_dom"/>
</dbReference>
<dbReference type="InterPro" id="IPR036838">
    <property type="entry name" value="Ribosomal_uS10_dom_sf"/>
</dbReference>
<dbReference type="NCBIfam" id="NF001861">
    <property type="entry name" value="PRK00596.1"/>
    <property type="match status" value="1"/>
</dbReference>
<dbReference type="NCBIfam" id="TIGR01049">
    <property type="entry name" value="rpsJ_bact"/>
    <property type="match status" value="1"/>
</dbReference>
<dbReference type="PANTHER" id="PTHR11700">
    <property type="entry name" value="30S RIBOSOMAL PROTEIN S10 FAMILY MEMBER"/>
    <property type="match status" value="1"/>
</dbReference>
<dbReference type="Pfam" id="PF00338">
    <property type="entry name" value="Ribosomal_S10"/>
    <property type="match status" value="1"/>
</dbReference>
<dbReference type="PRINTS" id="PR00971">
    <property type="entry name" value="RIBOSOMALS10"/>
</dbReference>
<dbReference type="SMART" id="SM01403">
    <property type="entry name" value="Ribosomal_S10"/>
    <property type="match status" value="1"/>
</dbReference>
<dbReference type="SUPFAM" id="SSF54999">
    <property type="entry name" value="Ribosomal protein S10"/>
    <property type="match status" value="1"/>
</dbReference>
<dbReference type="PROSITE" id="PS00361">
    <property type="entry name" value="RIBOSOMAL_S10"/>
    <property type="match status" value="1"/>
</dbReference>
<sequence length="102" mass="11669">MNGQNIRIRLKAFDHRILDTSTREIVNTAKRTGAQVRGPIPLPTRIEKFTVNRSPHVDKKSREQFEMRTHKRLLDIVDPTPQTVDALMKLDLAAGVDVEIKL</sequence>
<proteinExistence type="inferred from homology"/>
<organism>
    <name type="scientific">Nitrobacter hamburgensis (strain DSM 10229 / NCIMB 13809 / X14)</name>
    <dbReference type="NCBI Taxonomy" id="323097"/>
    <lineage>
        <taxon>Bacteria</taxon>
        <taxon>Pseudomonadati</taxon>
        <taxon>Pseudomonadota</taxon>
        <taxon>Alphaproteobacteria</taxon>
        <taxon>Hyphomicrobiales</taxon>
        <taxon>Nitrobacteraceae</taxon>
        <taxon>Nitrobacter</taxon>
    </lineage>
</organism>
<feature type="chain" id="PRO_0000258559" description="Small ribosomal subunit protein uS10">
    <location>
        <begin position="1"/>
        <end position="102"/>
    </location>
</feature>
<evidence type="ECO:0000255" key="1">
    <source>
        <dbReference type="HAMAP-Rule" id="MF_00508"/>
    </source>
</evidence>
<evidence type="ECO:0000305" key="2"/>
<protein>
    <recommendedName>
        <fullName evidence="1">Small ribosomal subunit protein uS10</fullName>
    </recommendedName>
    <alternativeName>
        <fullName evidence="2">30S ribosomal protein S10</fullName>
    </alternativeName>
</protein>